<name>SYFB_HALLT</name>
<organism>
    <name type="scientific">Halorubrum lacusprofundi (strain ATCC 49239 / DSM 5036 / JCM 8891 / ACAM 34)</name>
    <dbReference type="NCBI Taxonomy" id="416348"/>
    <lineage>
        <taxon>Archaea</taxon>
        <taxon>Methanobacteriati</taxon>
        <taxon>Methanobacteriota</taxon>
        <taxon>Stenosarchaea group</taxon>
        <taxon>Halobacteria</taxon>
        <taxon>Halobacteriales</taxon>
        <taxon>Haloferacaceae</taxon>
        <taxon>Halorubrum</taxon>
    </lineage>
</organism>
<comment type="catalytic activity">
    <reaction evidence="1">
        <text>tRNA(Phe) + L-phenylalanine + ATP = L-phenylalanyl-tRNA(Phe) + AMP + diphosphate + H(+)</text>
        <dbReference type="Rhea" id="RHEA:19413"/>
        <dbReference type="Rhea" id="RHEA-COMP:9668"/>
        <dbReference type="Rhea" id="RHEA-COMP:9699"/>
        <dbReference type="ChEBI" id="CHEBI:15378"/>
        <dbReference type="ChEBI" id="CHEBI:30616"/>
        <dbReference type="ChEBI" id="CHEBI:33019"/>
        <dbReference type="ChEBI" id="CHEBI:58095"/>
        <dbReference type="ChEBI" id="CHEBI:78442"/>
        <dbReference type="ChEBI" id="CHEBI:78531"/>
        <dbReference type="ChEBI" id="CHEBI:456215"/>
        <dbReference type="EC" id="6.1.1.20"/>
    </reaction>
</comment>
<comment type="cofactor">
    <cofactor evidence="1">
        <name>Mg(2+)</name>
        <dbReference type="ChEBI" id="CHEBI:18420"/>
    </cofactor>
</comment>
<comment type="subunit">
    <text evidence="1">Tetramer of two alpha and two beta subunits.</text>
</comment>
<comment type="subcellular location">
    <subcellularLocation>
        <location evidence="1">Cytoplasm</location>
    </subcellularLocation>
</comment>
<comment type="similarity">
    <text evidence="1">Belongs to the phenylalanyl-tRNA synthetase beta subunit family. Type 2 subfamily.</text>
</comment>
<evidence type="ECO:0000255" key="1">
    <source>
        <dbReference type="HAMAP-Rule" id="MF_00284"/>
    </source>
</evidence>
<keyword id="KW-0030">Aminoacyl-tRNA synthetase</keyword>
<keyword id="KW-0067">ATP-binding</keyword>
<keyword id="KW-0963">Cytoplasm</keyword>
<keyword id="KW-0436">Ligase</keyword>
<keyword id="KW-0460">Magnesium</keyword>
<keyword id="KW-0479">Metal-binding</keyword>
<keyword id="KW-0547">Nucleotide-binding</keyword>
<keyword id="KW-0648">Protein biosynthesis</keyword>
<keyword id="KW-1185">Reference proteome</keyword>
<dbReference type="EC" id="6.1.1.20" evidence="1"/>
<dbReference type="EMBL" id="CP001365">
    <property type="protein sequence ID" value="ACM58241.1"/>
    <property type="molecule type" value="Genomic_DNA"/>
</dbReference>
<dbReference type="RefSeq" id="WP_015911351.1">
    <property type="nucleotide sequence ID" value="NC_012029.1"/>
</dbReference>
<dbReference type="SMR" id="B9LU47"/>
<dbReference type="GeneID" id="7400876"/>
<dbReference type="KEGG" id="hla:Hlac_2670"/>
<dbReference type="eggNOG" id="arCOG00412">
    <property type="taxonomic scope" value="Archaea"/>
</dbReference>
<dbReference type="HOGENOM" id="CLU_020279_3_0_2"/>
<dbReference type="Proteomes" id="UP000000740">
    <property type="component" value="Chromosome 1"/>
</dbReference>
<dbReference type="GO" id="GO:0009328">
    <property type="term" value="C:phenylalanine-tRNA ligase complex"/>
    <property type="evidence" value="ECO:0007669"/>
    <property type="project" value="TreeGrafter"/>
</dbReference>
<dbReference type="GO" id="GO:0005524">
    <property type="term" value="F:ATP binding"/>
    <property type="evidence" value="ECO:0007669"/>
    <property type="project" value="UniProtKB-UniRule"/>
</dbReference>
<dbReference type="GO" id="GO:0000287">
    <property type="term" value="F:magnesium ion binding"/>
    <property type="evidence" value="ECO:0007669"/>
    <property type="project" value="InterPro"/>
</dbReference>
<dbReference type="GO" id="GO:0004826">
    <property type="term" value="F:phenylalanine-tRNA ligase activity"/>
    <property type="evidence" value="ECO:0007669"/>
    <property type="project" value="UniProtKB-UniRule"/>
</dbReference>
<dbReference type="GO" id="GO:0003723">
    <property type="term" value="F:RNA binding"/>
    <property type="evidence" value="ECO:0007669"/>
    <property type="project" value="InterPro"/>
</dbReference>
<dbReference type="GO" id="GO:0006432">
    <property type="term" value="P:phenylalanyl-tRNA aminoacylation"/>
    <property type="evidence" value="ECO:0007669"/>
    <property type="project" value="UniProtKB-UniRule"/>
</dbReference>
<dbReference type="CDD" id="cd00769">
    <property type="entry name" value="PheRS_beta_core"/>
    <property type="match status" value="1"/>
</dbReference>
<dbReference type="FunFam" id="3.50.40.10:FF:000003">
    <property type="entry name" value="Phenylalanine--tRNA ligase beta subunit"/>
    <property type="match status" value="1"/>
</dbReference>
<dbReference type="Gene3D" id="3.30.56.10">
    <property type="match status" value="2"/>
</dbReference>
<dbReference type="Gene3D" id="3.30.930.10">
    <property type="entry name" value="Bira Bifunctional Protein, Domain 2"/>
    <property type="match status" value="1"/>
</dbReference>
<dbReference type="Gene3D" id="3.50.40.10">
    <property type="entry name" value="Phenylalanyl-trna Synthetase, Chain B, domain 3"/>
    <property type="match status" value="1"/>
</dbReference>
<dbReference type="HAMAP" id="MF_00284">
    <property type="entry name" value="Phe_tRNA_synth_beta2"/>
    <property type="match status" value="1"/>
</dbReference>
<dbReference type="InterPro" id="IPR045864">
    <property type="entry name" value="aa-tRNA-synth_II/BPL/LPL"/>
</dbReference>
<dbReference type="InterPro" id="IPR005146">
    <property type="entry name" value="B3/B4_tRNA-bd"/>
</dbReference>
<dbReference type="InterPro" id="IPR009061">
    <property type="entry name" value="DNA-bd_dom_put_sf"/>
</dbReference>
<dbReference type="InterPro" id="IPR045060">
    <property type="entry name" value="Phe-tRNA-ligase_IIc_bsu"/>
</dbReference>
<dbReference type="InterPro" id="IPR004531">
    <property type="entry name" value="Phe-tRNA-synth_IIc_bsu_arc_euk"/>
</dbReference>
<dbReference type="InterPro" id="IPR020825">
    <property type="entry name" value="Phe-tRNA_synthase-like_B3/B4"/>
</dbReference>
<dbReference type="InterPro" id="IPR022918">
    <property type="entry name" value="Phe_tRNA_ligase_beta2_arc"/>
</dbReference>
<dbReference type="InterPro" id="IPR041616">
    <property type="entry name" value="PheRS_beta_core"/>
</dbReference>
<dbReference type="InterPro" id="IPR005147">
    <property type="entry name" value="tRNA_synthase_B5-dom"/>
</dbReference>
<dbReference type="NCBIfam" id="TIGR00471">
    <property type="entry name" value="pheT_arch"/>
    <property type="match status" value="1"/>
</dbReference>
<dbReference type="PANTHER" id="PTHR10947:SF0">
    <property type="entry name" value="PHENYLALANINE--TRNA LIGASE BETA SUBUNIT"/>
    <property type="match status" value="1"/>
</dbReference>
<dbReference type="PANTHER" id="PTHR10947">
    <property type="entry name" value="PHENYLALANYL-TRNA SYNTHETASE BETA CHAIN AND LEUCINE-RICH REPEAT-CONTAINING PROTEIN 47"/>
    <property type="match status" value="1"/>
</dbReference>
<dbReference type="Pfam" id="PF03484">
    <property type="entry name" value="B5"/>
    <property type="match status" value="1"/>
</dbReference>
<dbReference type="Pfam" id="PF17759">
    <property type="entry name" value="tRNA_synthFbeta"/>
    <property type="match status" value="1"/>
</dbReference>
<dbReference type="SMART" id="SM00873">
    <property type="entry name" value="B3_4"/>
    <property type="match status" value="1"/>
</dbReference>
<dbReference type="SMART" id="SM00874">
    <property type="entry name" value="B5"/>
    <property type="match status" value="1"/>
</dbReference>
<dbReference type="SUPFAM" id="SSF55681">
    <property type="entry name" value="Class II aaRS and biotin synthetases"/>
    <property type="match status" value="1"/>
</dbReference>
<dbReference type="SUPFAM" id="SSF46955">
    <property type="entry name" value="Putative DNA-binding domain"/>
    <property type="match status" value="2"/>
</dbReference>
<dbReference type="PROSITE" id="PS51483">
    <property type="entry name" value="B5"/>
    <property type="match status" value="1"/>
</dbReference>
<gene>
    <name evidence="1" type="primary">pheT</name>
    <name type="ordered locus">Hlac_2670</name>
</gene>
<reference key="1">
    <citation type="journal article" date="2016" name="Stand. Genomic Sci.">
        <title>Complete genome sequence of the Antarctic Halorubrum lacusprofundi type strain ACAM 34.</title>
        <authorList>
            <person name="Anderson I.J."/>
            <person name="DasSarma P."/>
            <person name="Lucas S."/>
            <person name="Copeland A."/>
            <person name="Lapidus A."/>
            <person name="Del Rio T.G."/>
            <person name="Tice H."/>
            <person name="Dalin E."/>
            <person name="Bruce D.C."/>
            <person name="Goodwin L."/>
            <person name="Pitluck S."/>
            <person name="Sims D."/>
            <person name="Brettin T.S."/>
            <person name="Detter J.C."/>
            <person name="Han C.S."/>
            <person name="Larimer F."/>
            <person name="Hauser L."/>
            <person name="Land M."/>
            <person name="Ivanova N."/>
            <person name="Richardson P."/>
            <person name="Cavicchioli R."/>
            <person name="DasSarma S."/>
            <person name="Woese C.R."/>
            <person name="Kyrpides N.C."/>
        </authorList>
    </citation>
    <scope>NUCLEOTIDE SEQUENCE [LARGE SCALE GENOMIC DNA]</scope>
    <source>
        <strain>ATCC 49239 / DSM 5036 / JCM 8891 / ACAM 34</strain>
    </source>
</reference>
<sequence length="578" mass="63944">MPVVDIDTDELRGLTGRTDTSDEEFKEDLFGLGLEFEGETDEDLLQFEFAPDRLDRLSVEGVARSLRYHYGDDRGVYVPETNDPEWTIEVDESVPDERPYVTGAVIRGVDLDEGALDSLIQLQEKLHATMGRGRAKGAIGIHDLAMVKGAPLQEGSEPSITYRGVDPDGVSFVPLDANDELTPNEVLAEHDTGQTYADLVEGLDRYPAIYDELGLFSFPPVINGKRTEVTTGSRELFVELTGTDQWTIDRMCNIVCYALSARGATIEQVEVNYADGATAPSEYGAELVRPNFDTDEKSVSHDRIETLLGVDFEPEEIVDCFERAGLDASYTLDEDVTYEVEIPPYRVDVLHPLDLVDDVGRAYGFDNLEPRYPDVGTVGGRHERSRLEDAVRTSLVGLGFEDLLNFHMTSGTENYDRMNLEAGSDAFGGGNPVEITEPYSEEYTQLRTWAIPSLVMLLERNTHNAYPQDVAEVGFAAERDDSENTNVAERRHVAGAVARRDASYEAAKGRLQAVCDDFRAELETPRTEHPSFIDGRTAAVVIDGEVVGVIGEVHPAVLVEHDLEVPVAAFEFHLDALR</sequence>
<protein>
    <recommendedName>
        <fullName evidence="1">Phenylalanine--tRNA ligase beta subunit</fullName>
        <ecNumber evidence="1">6.1.1.20</ecNumber>
    </recommendedName>
    <alternativeName>
        <fullName evidence="1">Phenylalanyl-tRNA synthetase beta subunit</fullName>
        <shortName evidence="1">PheRS</shortName>
    </alternativeName>
</protein>
<feature type="chain" id="PRO_1000199336" description="Phenylalanine--tRNA ligase beta subunit">
    <location>
        <begin position="1"/>
        <end position="578"/>
    </location>
</feature>
<feature type="domain" description="B5" evidence="1">
    <location>
        <begin position="292"/>
        <end position="370"/>
    </location>
</feature>
<feature type="binding site" evidence="1">
    <location>
        <position position="348"/>
    </location>
    <ligand>
        <name>Mg(2+)</name>
        <dbReference type="ChEBI" id="CHEBI:18420"/>
        <note>shared with alpha subunit</note>
    </ligand>
</feature>
<feature type="binding site" evidence="1">
    <location>
        <position position="354"/>
    </location>
    <ligand>
        <name>Mg(2+)</name>
        <dbReference type="ChEBI" id="CHEBI:18420"/>
        <note>shared with alpha subunit</note>
    </ligand>
</feature>
<feature type="binding site" evidence="1">
    <location>
        <position position="357"/>
    </location>
    <ligand>
        <name>Mg(2+)</name>
        <dbReference type="ChEBI" id="CHEBI:18420"/>
        <note>shared with alpha subunit</note>
    </ligand>
</feature>
<feature type="binding site" evidence="1">
    <location>
        <position position="358"/>
    </location>
    <ligand>
        <name>Mg(2+)</name>
        <dbReference type="ChEBI" id="CHEBI:18420"/>
        <note>shared with alpha subunit</note>
    </ligand>
</feature>
<accession>B9LU47</accession>
<proteinExistence type="inferred from homology"/>